<comment type="subcellular location">
    <subcellularLocation>
        <location evidence="1">Membrane</location>
        <topology evidence="1">Multi-pass membrane protein</topology>
    </subcellularLocation>
</comment>
<comment type="miscellaneous">
    <text evidence="2">Partially overlaps ECM1.</text>
</comment>
<comment type="caution">
    <text evidence="3">Product of a dubious gene prediction unlikely to encode a functional protein. Because of that it is not part of the S.cerevisiae S288c complete/reference proteome set.</text>
</comment>
<keyword id="KW-0472">Membrane</keyword>
<keyword id="KW-0812">Transmembrane</keyword>
<keyword id="KW-1133">Transmembrane helix</keyword>
<accession>A0A023PYD0</accession>
<evidence type="ECO:0000255" key="1"/>
<evidence type="ECO:0000305" key="2"/>
<evidence type="ECO:0000305" key="3">
    <source>
    </source>
</evidence>
<evidence type="ECO:0000312" key="4">
    <source>
        <dbReference type="SGD" id="S000028734"/>
    </source>
</evidence>
<gene>
    <name evidence="4" type="ordered locus">YAL059C-A</name>
</gene>
<dbReference type="EMBL" id="KJ412210">
    <property type="protein sequence ID" value="AHX39253.1"/>
    <property type="molecule type" value="Genomic_DNA"/>
</dbReference>
<dbReference type="STRING" id="4932.YAL059C-A"/>
<dbReference type="PaxDb" id="4932-YAL059C-A"/>
<dbReference type="EnsemblFungi" id="YAL059C-A_mRNA">
    <property type="protein sequence ID" value="YAL059C-A"/>
    <property type="gene ID" value="YAL059C-A"/>
</dbReference>
<dbReference type="AGR" id="SGD:S000028734"/>
<dbReference type="SGD" id="S000028734">
    <property type="gene designation" value="YAL059C-A"/>
</dbReference>
<dbReference type="HOGENOM" id="CLU_1836282_0_0_1"/>
<dbReference type="GO" id="GO:0016020">
    <property type="term" value="C:membrane"/>
    <property type="evidence" value="ECO:0007669"/>
    <property type="project" value="UniProtKB-SubCell"/>
</dbReference>
<feature type="chain" id="PRO_0000430974" description="Putative uncharacterized membrane protein YAL059C-A">
    <location>
        <begin position="1"/>
        <end position="140"/>
    </location>
</feature>
<feature type="transmembrane region" description="Helical; Name=1" evidence="1">
    <location>
        <begin position="42"/>
        <end position="62"/>
    </location>
</feature>
<feature type="transmembrane region" description="Helical; Name=2" evidence="1">
    <location>
        <begin position="65"/>
        <end position="85"/>
    </location>
</feature>
<feature type="transmembrane region" description="Helical; Name=3" evidence="1">
    <location>
        <begin position="96"/>
        <end position="116"/>
    </location>
</feature>
<sequence>MYLAREMDLAILPSRRLVKFKAFTKRSLSMDEIELASLSSRAFLFNFLPLLLLLAFLDIFASSNASFLAAVLIKILVKSVFSALGSSLKSFTSGSRASDCLAALEFFDIFLAMLCFRRYLTSIVKEKTTFCRLCSHIQYF</sequence>
<reference key="1">
    <citation type="journal article" date="1995" name="Proc. Natl. Acad. Sci. U.S.A.">
        <title>The nucleotide sequence of chromosome I from Saccharomyces cerevisiae.</title>
        <authorList>
            <person name="Bussey H."/>
            <person name="Kaback D.B."/>
            <person name="Zhong W.-W."/>
            <person name="Vo D.H."/>
            <person name="Clark M.W."/>
            <person name="Fortin N."/>
            <person name="Hall J."/>
            <person name="Ouellette B.F.F."/>
            <person name="Keng T."/>
            <person name="Barton A.B."/>
            <person name="Su Y."/>
            <person name="Davies C.J."/>
            <person name="Storms R.K."/>
        </authorList>
    </citation>
    <scope>NUCLEOTIDE SEQUENCE [LARGE SCALE GENOMIC DNA]</scope>
    <source>
        <strain>ATCC 204508 / S288c</strain>
    </source>
</reference>
<reference key="2">
    <citation type="journal article" date="2014" name="G3 (Bethesda)">
        <title>The reference genome sequence of Saccharomyces cerevisiae: Then and now.</title>
        <authorList>
            <person name="Engel S.R."/>
            <person name="Dietrich F.S."/>
            <person name="Fisk D.G."/>
            <person name="Binkley G."/>
            <person name="Balakrishnan R."/>
            <person name="Costanzo M.C."/>
            <person name="Dwight S.S."/>
            <person name="Hitz B.C."/>
            <person name="Karra K."/>
            <person name="Nash R.S."/>
            <person name="Weng S."/>
            <person name="Wong E.D."/>
            <person name="Lloyd P."/>
            <person name="Skrzypek M.S."/>
            <person name="Miyasato S.R."/>
            <person name="Simison M."/>
            <person name="Cherry J.M."/>
        </authorList>
    </citation>
    <scope>GENOME REANNOTATION</scope>
    <source>
        <strain>ATCC 204508 / S288c</strain>
    </source>
</reference>
<proteinExistence type="uncertain"/>
<protein>
    <recommendedName>
        <fullName evidence="2">Putative uncharacterized membrane protein YAL059C-A</fullName>
    </recommendedName>
</protein>
<name>YA059_YEAST</name>
<organism>
    <name type="scientific">Saccharomyces cerevisiae (strain ATCC 204508 / S288c)</name>
    <name type="common">Baker's yeast</name>
    <dbReference type="NCBI Taxonomy" id="559292"/>
    <lineage>
        <taxon>Eukaryota</taxon>
        <taxon>Fungi</taxon>
        <taxon>Dikarya</taxon>
        <taxon>Ascomycota</taxon>
        <taxon>Saccharomycotina</taxon>
        <taxon>Saccharomycetes</taxon>
        <taxon>Saccharomycetales</taxon>
        <taxon>Saccharomycetaceae</taxon>
        <taxon>Saccharomyces</taxon>
    </lineage>
</organism>